<organism>
    <name type="scientific">Pseudomonas putida (strain W619)</name>
    <dbReference type="NCBI Taxonomy" id="390235"/>
    <lineage>
        <taxon>Bacteria</taxon>
        <taxon>Pseudomonadati</taxon>
        <taxon>Pseudomonadota</taxon>
        <taxon>Gammaproteobacteria</taxon>
        <taxon>Pseudomonadales</taxon>
        <taxon>Pseudomonadaceae</taxon>
        <taxon>Pseudomonas</taxon>
    </lineage>
</organism>
<comment type="subcellular location">
    <subcellularLocation>
        <location evidence="1">Bacterial flagellum basal body</location>
    </subcellularLocation>
</comment>
<comment type="similarity">
    <text evidence="1">Belongs to the FliE family.</text>
</comment>
<sequence>MSQGVEFNRLMLDMRAMQADAMSLPKATAAPELAEGQSSFADMLGQAIGKVHQTQQASTQLANAFEIGKSGVDLTDVMIASQKASVSMQALTQVRNKLVQAYQDIMQMPV</sequence>
<name>FLIE_PSEPW</name>
<accession>B1JC95</accession>
<proteinExistence type="inferred from homology"/>
<feature type="chain" id="PRO_1000132666" description="Flagellar hook-basal body complex protein FliE">
    <location>
        <begin position="1"/>
        <end position="110"/>
    </location>
</feature>
<evidence type="ECO:0000255" key="1">
    <source>
        <dbReference type="HAMAP-Rule" id="MF_00724"/>
    </source>
</evidence>
<reference key="1">
    <citation type="submission" date="2008-02" db="EMBL/GenBank/DDBJ databases">
        <title>Complete sequence of Pseudomonas putida W619.</title>
        <authorList>
            <person name="Copeland A."/>
            <person name="Lucas S."/>
            <person name="Lapidus A."/>
            <person name="Barry K."/>
            <person name="Detter J.C."/>
            <person name="Glavina del Rio T."/>
            <person name="Dalin E."/>
            <person name="Tice H."/>
            <person name="Pitluck S."/>
            <person name="Chain P."/>
            <person name="Malfatti S."/>
            <person name="Shin M."/>
            <person name="Vergez L."/>
            <person name="Schmutz J."/>
            <person name="Larimer F."/>
            <person name="Land M."/>
            <person name="Hauser L."/>
            <person name="Kyrpides N."/>
            <person name="Kim E."/>
            <person name="Taghavi S."/>
            <person name="Vangronsveld D."/>
            <person name="van der Lelie D."/>
            <person name="Richardson P."/>
        </authorList>
    </citation>
    <scope>NUCLEOTIDE SEQUENCE [LARGE SCALE GENOMIC DNA]</scope>
    <source>
        <strain>W619</strain>
    </source>
</reference>
<keyword id="KW-0975">Bacterial flagellum</keyword>
<gene>
    <name evidence="1" type="primary">fliE</name>
    <name type="ordered locus">PputW619_3695</name>
</gene>
<protein>
    <recommendedName>
        <fullName evidence="1">Flagellar hook-basal body complex protein FliE</fullName>
    </recommendedName>
</protein>
<dbReference type="EMBL" id="CP000949">
    <property type="protein sequence ID" value="ACA74177.1"/>
    <property type="molecule type" value="Genomic_DNA"/>
</dbReference>
<dbReference type="SMR" id="B1JC95"/>
<dbReference type="STRING" id="390235.PputW619_3695"/>
<dbReference type="KEGG" id="ppw:PputW619_3695"/>
<dbReference type="eggNOG" id="COG1677">
    <property type="taxonomic scope" value="Bacteria"/>
</dbReference>
<dbReference type="HOGENOM" id="CLU_147249_0_0_6"/>
<dbReference type="OrthoDB" id="8909229at2"/>
<dbReference type="GO" id="GO:0009425">
    <property type="term" value="C:bacterial-type flagellum basal body"/>
    <property type="evidence" value="ECO:0007669"/>
    <property type="project" value="UniProtKB-SubCell"/>
</dbReference>
<dbReference type="GO" id="GO:0003774">
    <property type="term" value="F:cytoskeletal motor activity"/>
    <property type="evidence" value="ECO:0007669"/>
    <property type="project" value="InterPro"/>
</dbReference>
<dbReference type="GO" id="GO:0005198">
    <property type="term" value="F:structural molecule activity"/>
    <property type="evidence" value="ECO:0007669"/>
    <property type="project" value="InterPro"/>
</dbReference>
<dbReference type="GO" id="GO:0071973">
    <property type="term" value="P:bacterial-type flagellum-dependent cell motility"/>
    <property type="evidence" value="ECO:0007669"/>
    <property type="project" value="InterPro"/>
</dbReference>
<dbReference type="HAMAP" id="MF_00724">
    <property type="entry name" value="FliE"/>
    <property type="match status" value="1"/>
</dbReference>
<dbReference type="InterPro" id="IPR001624">
    <property type="entry name" value="FliE"/>
</dbReference>
<dbReference type="NCBIfam" id="TIGR00205">
    <property type="entry name" value="fliE"/>
    <property type="match status" value="1"/>
</dbReference>
<dbReference type="PANTHER" id="PTHR34653">
    <property type="match status" value="1"/>
</dbReference>
<dbReference type="PANTHER" id="PTHR34653:SF1">
    <property type="entry name" value="FLAGELLAR HOOK-BASAL BODY COMPLEX PROTEIN FLIE"/>
    <property type="match status" value="1"/>
</dbReference>
<dbReference type="Pfam" id="PF02049">
    <property type="entry name" value="FliE"/>
    <property type="match status" value="1"/>
</dbReference>
<dbReference type="PRINTS" id="PR01006">
    <property type="entry name" value="FLGHOOKFLIE"/>
</dbReference>